<protein>
    <recommendedName>
        <fullName evidence="1">Glycerol-3-phosphate dehydrogenase [NAD(P)+]</fullName>
        <ecNumber evidence="1">1.1.1.94</ecNumber>
    </recommendedName>
    <alternativeName>
        <fullName evidence="1">NAD(P)(+)-dependent glycerol-3-phosphate dehydrogenase</fullName>
    </alternativeName>
    <alternativeName>
        <fullName evidence="1">NAD(P)H-dependent dihydroxyacetone-phosphate reductase</fullName>
    </alternativeName>
</protein>
<accession>Q07VX1</accession>
<name>GPDA_SHEFN</name>
<organism>
    <name type="scientific">Shewanella frigidimarina (strain NCIMB 400)</name>
    <dbReference type="NCBI Taxonomy" id="318167"/>
    <lineage>
        <taxon>Bacteria</taxon>
        <taxon>Pseudomonadati</taxon>
        <taxon>Pseudomonadota</taxon>
        <taxon>Gammaproteobacteria</taxon>
        <taxon>Alteromonadales</taxon>
        <taxon>Shewanellaceae</taxon>
        <taxon>Shewanella</taxon>
    </lineage>
</organism>
<feature type="chain" id="PRO_1000049550" description="Glycerol-3-phosphate dehydrogenase [NAD(P)+]">
    <location>
        <begin position="1"/>
        <end position="338"/>
    </location>
</feature>
<feature type="active site" description="Proton acceptor" evidence="1">
    <location>
        <position position="194"/>
    </location>
</feature>
<feature type="binding site" evidence="1">
    <location>
        <position position="14"/>
    </location>
    <ligand>
        <name>NADPH</name>
        <dbReference type="ChEBI" id="CHEBI:57783"/>
    </ligand>
</feature>
<feature type="binding site" evidence="1">
    <location>
        <position position="15"/>
    </location>
    <ligand>
        <name>NADPH</name>
        <dbReference type="ChEBI" id="CHEBI:57783"/>
    </ligand>
</feature>
<feature type="binding site" evidence="1">
    <location>
        <position position="35"/>
    </location>
    <ligand>
        <name>NADPH</name>
        <dbReference type="ChEBI" id="CHEBI:57783"/>
    </ligand>
</feature>
<feature type="binding site" evidence="1">
    <location>
        <position position="109"/>
    </location>
    <ligand>
        <name>NADPH</name>
        <dbReference type="ChEBI" id="CHEBI:57783"/>
    </ligand>
</feature>
<feature type="binding site" evidence="1">
    <location>
        <position position="109"/>
    </location>
    <ligand>
        <name>sn-glycerol 3-phosphate</name>
        <dbReference type="ChEBI" id="CHEBI:57597"/>
    </ligand>
</feature>
<feature type="binding site" evidence="1">
    <location>
        <position position="138"/>
    </location>
    <ligand>
        <name>sn-glycerol 3-phosphate</name>
        <dbReference type="ChEBI" id="CHEBI:57597"/>
    </ligand>
</feature>
<feature type="binding site" evidence="1">
    <location>
        <position position="140"/>
    </location>
    <ligand>
        <name>sn-glycerol 3-phosphate</name>
        <dbReference type="ChEBI" id="CHEBI:57597"/>
    </ligand>
</feature>
<feature type="binding site" evidence="1">
    <location>
        <position position="142"/>
    </location>
    <ligand>
        <name>NADPH</name>
        <dbReference type="ChEBI" id="CHEBI:57783"/>
    </ligand>
</feature>
<feature type="binding site" evidence="1">
    <location>
        <position position="194"/>
    </location>
    <ligand>
        <name>sn-glycerol 3-phosphate</name>
        <dbReference type="ChEBI" id="CHEBI:57597"/>
    </ligand>
</feature>
<feature type="binding site" evidence="1">
    <location>
        <position position="247"/>
    </location>
    <ligand>
        <name>sn-glycerol 3-phosphate</name>
        <dbReference type="ChEBI" id="CHEBI:57597"/>
    </ligand>
</feature>
<feature type="binding site" evidence="1">
    <location>
        <position position="257"/>
    </location>
    <ligand>
        <name>sn-glycerol 3-phosphate</name>
        <dbReference type="ChEBI" id="CHEBI:57597"/>
    </ligand>
</feature>
<feature type="binding site" evidence="1">
    <location>
        <position position="258"/>
    </location>
    <ligand>
        <name>NADPH</name>
        <dbReference type="ChEBI" id="CHEBI:57783"/>
    </ligand>
</feature>
<feature type="binding site" evidence="1">
    <location>
        <position position="258"/>
    </location>
    <ligand>
        <name>sn-glycerol 3-phosphate</name>
        <dbReference type="ChEBI" id="CHEBI:57597"/>
    </ligand>
</feature>
<feature type="binding site" evidence="1">
    <location>
        <position position="259"/>
    </location>
    <ligand>
        <name>sn-glycerol 3-phosphate</name>
        <dbReference type="ChEBI" id="CHEBI:57597"/>
    </ligand>
</feature>
<feature type="binding site" evidence="1">
    <location>
        <position position="282"/>
    </location>
    <ligand>
        <name>NADPH</name>
        <dbReference type="ChEBI" id="CHEBI:57783"/>
    </ligand>
</feature>
<feature type="binding site" evidence="1">
    <location>
        <position position="284"/>
    </location>
    <ligand>
        <name>NADPH</name>
        <dbReference type="ChEBI" id="CHEBI:57783"/>
    </ligand>
</feature>
<sequence length="338" mass="36052">MNNAAEITVLGAGSYGTALAISLASNGHKTLLWGHDPKSMQVLAESRSNERFLPGIQFPDCLSIEADLGKALAASKNILVVVPSHVFGDVLKQAKPLLRDDARIVWATKGLEPETGRLLQDVAREQLGEHYPLAVLSGPTFAKELAAGLPTAISVAGTCPQFTHDLVELLHSPKRLRVYANDDFIGIQLGGAVKNVIAIGAGMSDGIGFGANARTALITRGLVELSRLGEAIGADASTFIGMAGLGDLVLTCTDNQSRNRRFGLALGQGKDVITAQEEIGQVVEGYRNTKEVFTLAKRLGVEMPITEQIYQVLYQGKAPVEAAKELLSRDKKSETLKK</sequence>
<keyword id="KW-0963">Cytoplasm</keyword>
<keyword id="KW-0444">Lipid biosynthesis</keyword>
<keyword id="KW-0443">Lipid metabolism</keyword>
<keyword id="KW-0520">NAD</keyword>
<keyword id="KW-0521">NADP</keyword>
<keyword id="KW-0547">Nucleotide-binding</keyword>
<keyword id="KW-0560">Oxidoreductase</keyword>
<keyword id="KW-0594">Phospholipid biosynthesis</keyword>
<keyword id="KW-1208">Phospholipid metabolism</keyword>
<keyword id="KW-1185">Reference proteome</keyword>
<comment type="function">
    <text evidence="1">Catalyzes the reduction of the glycolytic intermediate dihydroxyacetone phosphate (DHAP) to sn-glycerol 3-phosphate (G3P), the key precursor for phospholipid synthesis.</text>
</comment>
<comment type="catalytic activity">
    <reaction evidence="1">
        <text>sn-glycerol 3-phosphate + NAD(+) = dihydroxyacetone phosphate + NADH + H(+)</text>
        <dbReference type="Rhea" id="RHEA:11092"/>
        <dbReference type="ChEBI" id="CHEBI:15378"/>
        <dbReference type="ChEBI" id="CHEBI:57540"/>
        <dbReference type="ChEBI" id="CHEBI:57597"/>
        <dbReference type="ChEBI" id="CHEBI:57642"/>
        <dbReference type="ChEBI" id="CHEBI:57945"/>
        <dbReference type="EC" id="1.1.1.94"/>
    </reaction>
    <physiologicalReaction direction="right-to-left" evidence="1">
        <dbReference type="Rhea" id="RHEA:11094"/>
    </physiologicalReaction>
</comment>
<comment type="catalytic activity">
    <reaction evidence="1">
        <text>sn-glycerol 3-phosphate + NADP(+) = dihydroxyacetone phosphate + NADPH + H(+)</text>
        <dbReference type="Rhea" id="RHEA:11096"/>
        <dbReference type="ChEBI" id="CHEBI:15378"/>
        <dbReference type="ChEBI" id="CHEBI:57597"/>
        <dbReference type="ChEBI" id="CHEBI:57642"/>
        <dbReference type="ChEBI" id="CHEBI:57783"/>
        <dbReference type="ChEBI" id="CHEBI:58349"/>
        <dbReference type="EC" id="1.1.1.94"/>
    </reaction>
    <physiologicalReaction direction="right-to-left" evidence="1">
        <dbReference type="Rhea" id="RHEA:11098"/>
    </physiologicalReaction>
</comment>
<comment type="pathway">
    <text evidence="1">Membrane lipid metabolism; glycerophospholipid metabolism.</text>
</comment>
<comment type="subcellular location">
    <subcellularLocation>
        <location evidence="1">Cytoplasm</location>
    </subcellularLocation>
</comment>
<comment type="similarity">
    <text evidence="1">Belongs to the NAD-dependent glycerol-3-phosphate dehydrogenase family.</text>
</comment>
<evidence type="ECO:0000255" key="1">
    <source>
        <dbReference type="HAMAP-Rule" id="MF_00394"/>
    </source>
</evidence>
<dbReference type="EC" id="1.1.1.94" evidence="1"/>
<dbReference type="EMBL" id="CP000447">
    <property type="protein sequence ID" value="ABI73843.1"/>
    <property type="molecule type" value="Genomic_DNA"/>
</dbReference>
<dbReference type="RefSeq" id="WP_011639423.1">
    <property type="nucleotide sequence ID" value="NC_008345.1"/>
</dbReference>
<dbReference type="SMR" id="Q07VX1"/>
<dbReference type="STRING" id="318167.Sfri_4018"/>
<dbReference type="KEGG" id="sfr:Sfri_4018"/>
<dbReference type="eggNOG" id="COG0240">
    <property type="taxonomic scope" value="Bacteria"/>
</dbReference>
<dbReference type="HOGENOM" id="CLU_033449_0_2_6"/>
<dbReference type="OrthoDB" id="9812273at2"/>
<dbReference type="UniPathway" id="UPA00940"/>
<dbReference type="Proteomes" id="UP000000684">
    <property type="component" value="Chromosome"/>
</dbReference>
<dbReference type="GO" id="GO:0005829">
    <property type="term" value="C:cytosol"/>
    <property type="evidence" value="ECO:0007669"/>
    <property type="project" value="TreeGrafter"/>
</dbReference>
<dbReference type="GO" id="GO:0047952">
    <property type="term" value="F:glycerol-3-phosphate dehydrogenase [NAD(P)+] activity"/>
    <property type="evidence" value="ECO:0007669"/>
    <property type="project" value="UniProtKB-UniRule"/>
</dbReference>
<dbReference type="GO" id="GO:0051287">
    <property type="term" value="F:NAD binding"/>
    <property type="evidence" value="ECO:0007669"/>
    <property type="project" value="InterPro"/>
</dbReference>
<dbReference type="GO" id="GO:0005975">
    <property type="term" value="P:carbohydrate metabolic process"/>
    <property type="evidence" value="ECO:0007669"/>
    <property type="project" value="InterPro"/>
</dbReference>
<dbReference type="GO" id="GO:0046167">
    <property type="term" value="P:glycerol-3-phosphate biosynthetic process"/>
    <property type="evidence" value="ECO:0007669"/>
    <property type="project" value="UniProtKB-UniRule"/>
</dbReference>
<dbReference type="GO" id="GO:0046168">
    <property type="term" value="P:glycerol-3-phosphate catabolic process"/>
    <property type="evidence" value="ECO:0007669"/>
    <property type="project" value="InterPro"/>
</dbReference>
<dbReference type="GO" id="GO:0046474">
    <property type="term" value="P:glycerophospholipid biosynthetic process"/>
    <property type="evidence" value="ECO:0007669"/>
    <property type="project" value="TreeGrafter"/>
</dbReference>
<dbReference type="FunFam" id="1.10.1040.10:FF:000001">
    <property type="entry name" value="Glycerol-3-phosphate dehydrogenase [NAD(P)+]"/>
    <property type="match status" value="1"/>
</dbReference>
<dbReference type="FunFam" id="3.40.50.720:FF:000019">
    <property type="entry name" value="Glycerol-3-phosphate dehydrogenase [NAD(P)+]"/>
    <property type="match status" value="1"/>
</dbReference>
<dbReference type="Gene3D" id="1.10.1040.10">
    <property type="entry name" value="N-(1-d-carboxylethyl)-l-norvaline Dehydrogenase, domain 2"/>
    <property type="match status" value="1"/>
</dbReference>
<dbReference type="Gene3D" id="3.40.50.720">
    <property type="entry name" value="NAD(P)-binding Rossmann-like Domain"/>
    <property type="match status" value="1"/>
</dbReference>
<dbReference type="HAMAP" id="MF_00394">
    <property type="entry name" value="NAD_Glyc3P_dehydrog"/>
    <property type="match status" value="1"/>
</dbReference>
<dbReference type="InterPro" id="IPR008927">
    <property type="entry name" value="6-PGluconate_DH-like_C_sf"/>
</dbReference>
<dbReference type="InterPro" id="IPR013328">
    <property type="entry name" value="6PGD_dom2"/>
</dbReference>
<dbReference type="InterPro" id="IPR006168">
    <property type="entry name" value="G3P_DH_NAD-dep"/>
</dbReference>
<dbReference type="InterPro" id="IPR006109">
    <property type="entry name" value="G3P_DH_NAD-dep_C"/>
</dbReference>
<dbReference type="InterPro" id="IPR011128">
    <property type="entry name" value="G3P_DH_NAD-dep_N"/>
</dbReference>
<dbReference type="InterPro" id="IPR036291">
    <property type="entry name" value="NAD(P)-bd_dom_sf"/>
</dbReference>
<dbReference type="NCBIfam" id="NF000939">
    <property type="entry name" value="PRK00094.1-1"/>
    <property type="match status" value="1"/>
</dbReference>
<dbReference type="NCBIfam" id="NF000940">
    <property type="entry name" value="PRK00094.1-2"/>
    <property type="match status" value="1"/>
</dbReference>
<dbReference type="NCBIfam" id="NF000942">
    <property type="entry name" value="PRK00094.1-4"/>
    <property type="match status" value="1"/>
</dbReference>
<dbReference type="PANTHER" id="PTHR11728">
    <property type="entry name" value="GLYCEROL-3-PHOSPHATE DEHYDROGENASE"/>
    <property type="match status" value="1"/>
</dbReference>
<dbReference type="PANTHER" id="PTHR11728:SF1">
    <property type="entry name" value="GLYCEROL-3-PHOSPHATE DEHYDROGENASE [NAD(+)] 2, CHLOROPLASTIC"/>
    <property type="match status" value="1"/>
</dbReference>
<dbReference type="Pfam" id="PF07479">
    <property type="entry name" value="NAD_Gly3P_dh_C"/>
    <property type="match status" value="1"/>
</dbReference>
<dbReference type="Pfam" id="PF01210">
    <property type="entry name" value="NAD_Gly3P_dh_N"/>
    <property type="match status" value="1"/>
</dbReference>
<dbReference type="PIRSF" id="PIRSF000114">
    <property type="entry name" value="Glycerol-3-P_dh"/>
    <property type="match status" value="1"/>
</dbReference>
<dbReference type="PRINTS" id="PR00077">
    <property type="entry name" value="GPDHDRGNASE"/>
</dbReference>
<dbReference type="SUPFAM" id="SSF48179">
    <property type="entry name" value="6-phosphogluconate dehydrogenase C-terminal domain-like"/>
    <property type="match status" value="1"/>
</dbReference>
<dbReference type="SUPFAM" id="SSF51735">
    <property type="entry name" value="NAD(P)-binding Rossmann-fold domains"/>
    <property type="match status" value="1"/>
</dbReference>
<dbReference type="PROSITE" id="PS00957">
    <property type="entry name" value="NAD_G3PDH"/>
    <property type="match status" value="1"/>
</dbReference>
<gene>
    <name evidence="1" type="primary">gpsA</name>
    <name type="ordered locus">Sfri_4018</name>
</gene>
<proteinExistence type="inferred from homology"/>
<reference key="1">
    <citation type="submission" date="2006-08" db="EMBL/GenBank/DDBJ databases">
        <title>Complete sequence of Shewanella frigidimarina NCIMB 400.</title>
        <authorList>
            <consortium name="US DOE Joint Genome Institute"/>
            <person name="Copeland A."/>
            <person name="Lucas S."/>
            <person name="Lapidus A."/>
            <person name="Barry K."/>
            <person name="Detter J.C."/>
            <person name="Glavina del Rio T."/>
            <person name="Hammon N."/>
            <person name="Israni S."/>
            <person name="Dalin E."/>
            <person name="Tice H."/>
            <person name="Pitluck S."/>
            <person name="Fredrickson J.K."/>
            <person name="Kolker E."/>
            <person name="McCuel L.A."/>
            <person name="DiChristina T."/>
            <person name="Nealson K.H."/>
            <person name="Newman D."/>
            <person name="Tiedje J.M."/>
            <person name="Zhou J."/>
            <person name="Romine M.F."/>
            <person name="Culley D.E."/>
            <person name="Serres M."/>
            <person name="Chertkov O."/>
            <person name="Brettin T."/>
            <person name="Bruce D."/>
            <person name="Han C."/>
            <person name="Tapia R."/>
            <person name="Gilna P."/>
            <person name="Schmutz J."/>
            <person name="Larimer F."/>
            <person name="Land M."/>
            <person name="Hauser L."/>
            <person name="Kyrpides N."/>
            <person name="Mikhailova N."/>
            <person name="Richardson P."/>
        </authorList>
    </citation>
    <scope>NUCLEOTIDE SEQUENCE [LARGE SCALE GENOMIC DNA]</scope>
    <source>
        <strain>NCIMB 400</strain>
    </source>
</reference>